<comment type="catalytic activity">
    <reaction evidence="1">
        <text>GTP + H2O = 7,8-dihydroneopterin 3'-triphosphate + formate + H(+)</text>
        <dbReference type="Rhea" id="RHEA:17473"/>
        <dbReference type="ChEBI" id="CHEBI:15377"/>
        <dbReference type="ChEBI" id="CHEBI:15378"/>
        <dbReference type="ChEBI" id="CHEBI:15740"/>
        <dbReference type="ChEBI" id="CHEBI:37565"/>
        <dbReference type="ChEBI" id="CHEBI:58462"/>
        <dbReference type="EC" id="3.5.4.16"/>
    </reaction>
</comment>
<comment type="pathway">
    <text evidence="1">Cofactor biosynthesis; 7,8-dihydroneopterin triphosphate biosynthesis; 7,8-dihydroneopterin triphosphate from GTP: step 1/1.</text>
</comment>
<comment type="subunit">
    <text evidence="1">Homomer.</text>
</comment>
<comment type="similarity">
    <text evidence="1">Belongs to the GTP cyclohydrolase I family.</text>
</comment>
<feature type="chain" id="PRO_1000100178" description="GTP cyclohydrolase 1">
    <location>
        <begin position="1"/>
        <end position="193"/>
    </location>
</feature>
<feature type="binding site" evidence="1">
    <location>
        <position position="73"/>
    </location>
    <ligand>
        <name>Zn(2+)</name>
        <dbReference type="ChEBI" id="CHEBI:29105"/>
    </ligand>
</feature>
<feature type="binding site" evidence="1">
    <location>
        <position position="76"/>
    </location>
    <ligand>
        <name>Zn(2+)</name>
        <dbReference type="ChEBI" id="CHEBI:29105"/>
    </ligand>
</feature>
<feature type="binding site" evidence="1">
    <location>
        <position position="144"/>
    </location>
    <ligand>
        <name>Zn(2+)</name>
        <dbReference type="ChEBI" id="CHEBI:29105"/>
    </ligand>
</feature>
<proteinExistence type="inferred from homology"/>
<protein>
    <recommendedName>
        <fullName evidence="1">GTP cyclohydrolase 1</fullName>
        <ecNumber evidence="1">3.5.4.16</ecNumber>
    </recommendedName>
    <alternativeName>
        <fullName evidence="1">GTP cyclohydrolase I</fullName>
        <shortName evidence="1">GTP-CH-I</shortName>
    </alternativeName>
</protein>
<evidence type="ECO:0000255" key="1">
    <source>
        <dbReference type="HAMAP-Rule" id="MF_00223"/>
    </source>
</evidence>
<dbReference type="EC" id="3.5.4.16" evidence="1"/>
<dbReference type="EMBL" id="CP000493">
    <property type="protein sequence ID" value="ABM80719.1"/>
    <property type="molecule type" value="Genomic_DNA"/>
</dbReference>
<dbReference type="SMR" id="A2BL58"/>
<dbReference type="STRING" id="415426.Hbut_0868"/>
<dbReference type="EnsemblBacteria" id="ABM80719">
    <property type="protein sequence ID" value="ABM80719"/>
    <property type="gene ID" value="Hbut_0868"/>
</dbReference>
<dbReference type="KEGG" id="hbu:Hbut_0868"/>
<dbReference type="eggNOG" id="arCOG04542">
    <property type="taxonomic scope" value="Archaea"/>
</dbReference>
<dbReference type="HOGENOM" id="CLU_049768_3_3_2"/>
<dbReference type="OrthoDB" id="8438at2157"/>
<dbReference type="UniPathway" id="UPA00848">
    <property type="reaction ID" value="UER00151"/>
</dbReference>
<dbReference type="Proteomes" id="UP000002593">
    <property type="component" value="Chromosome"/>
</dbReference>
<dbReference type="GO" id="GO:0005737">
    <property type="term" value="C:cytoplasm"/>
    <property type="evidence" value="ECO:0007669"/>
    <property type="project" value="TreeGrafter"/>
</dbReference>
<dbReference type="GO" id="GO:0005525">
    <property type="term" value="F:GTP binding"/>
    <property type="evidence" value="ECO:0007669"/>
    <property type="project" value="UniProtKB-KW"/>
</dbReference>
<dbReference type="GO" id="GO:0003934">
    <property type="term" value="F:GTP cyclohydrolase I activity"/>
    <property type="evidence" value="ECO:0007669"/>
    <property type="project" value="UniProtKB-UniRule"/>
</dbReference>
<dbReference type="GO" id="GO:0008270">
    <property type="term" value="F:zinc ion binding"/>
    <property type="evidence" value="ECO:0007669"/>
    <property type="project" value="UniProtKB-UniRule"/>
</dbReference>
<dbReference type="GO" id="GO:0006730">
    <property type="term" value="P:one-carbon metabolic process"/>
    <property type="evidence" value="ECO:0007669"/>
    <property type="project" value="UniProtKB-UniRule"/>
</dbReference>
<dbReference type="GO" id="GO:0006729">
    <property type="term" value="P:tetrahydrobiopterin biosynthetic process"/>
    <property type="evidence" value="ECO:0007669"/>
    <property type="project" value="TreeGrafter"/>
</dbReference>
<dbReference type="GO" id="GO:0046654">
    <property type="term" value="P:tetrahydrofolate biosynthetic process"/>
    <property type="evidence" value="ECO:0007669"/>
    <property type="project" value="UniProtKB-UniRule"/>
</dbReference>
<dbReference type="FunFam" id="1.10.286.10:FF:000001">
    <property type="entry name" value="GTP cyclohydrolase 1"/>
    <property type="match status" value="1"/>
</dbReference>
<dbReference type="FunFam" id="3.30.1130.10:FF:000001">
    <property type="entry name" value="GTP cyclohydrolase 1"/>
    <property type="match status" value="1"/>
</dbReference>
<dbReference type="Gene3D" id="1.10.286.10">
    <property type="match status" value="1"/>
</dbReference>
<dbReference type="Gene3D" id="3.30.1130.10">
    <property type="match status" value="1"/>
</dbReference>
<dbReference type="HAMAP" id="MF_00223">
    <property type="entry name" value="FolE"/>
    <property type="match status" value="1"/>
</dbReference>
<dbReference type="InterPro" id="IPR043133">
    <property type="entry name" value="GTP-CH-I_C/QueF"/>
</dbReference>
<dbReference type="InterPro" id="IPR043134">
    <property type="entry name" value="GTP-CH-I_N"/>
</dbReference>
<dbReference type="InterPro" id="IPR001474">
    <property type="entry name" value="GTP_CycHdrlase_I"/>
</dbReference>
<dbReference type="InterPro" id="IPR018234">
    <property type="entry name" value="GTP_CycHdrlase_I_CS"/>
</dbReference>
<dbReference type="InterPro" id="IPR020602">
    <property type="entry name" value="GTP_CycHdrlase_I_dom"/>
</dbReference>
<dbReference type="NCBIfam" id="TIGR00063">
    <property type="entry name" value="folE"/>
    <property type="match status" value="1"/>
</dbReference>
<dbReference type="NCBIfam" id="NF006825">
    <property type="entry name" value="PRK09347.1-2"/>
    <property type="match status" value="1"/>
</dbReference>
<dbReference type="NCBIfam" id="NF006826">
    <property type="entry name" value="PRK09347.1-3"/>
    <property type="match status" value="1"/>
</dbReference>
<dbReference type="PANTHER" id="PTHR11109:SF7">
    <property type="entry name" value="GTP CYCLOHYDROLASE 1"/>
    <property type="match status" value="1"/>
</dbReference>
<dbReference type="PANTHER" id="PTHR11109">
    <property type="entry name" value="GTP CYCLOHYDROLASE I"/>
    <property type="match status" value="1"/>
</dbReference>
<dbReference type="Pfam" id="PF01227">
    <property type="entry name" value="GTP_cyclohydroI"/>
    <property type="match status" value="1"/>
</dbReference>
<dbReference type="SUPFAM" id="SSF55620">
    <property type="entry name" value="Tetrahydrobiopterin biosynthesis enzymes-like"/>
    <property type="match status" value="1"/>
</dbReference>
<dbReference type="PROSITE" id="PS00860">
    <property type="entry name" value="GTP_CYCLOHYDROL_1_2"/>
    <property type="match status" value="1"/>
</dbReference>
<accession>A2BL58</accession>
<organism>
    <name type="scientific">Hyperthermus butylicus (strain DSM 5456 / JCM 9403 / PLM1-5)</name>
    <dbReference type="NCBI Taxonomy" id="415426"/>
    <lineage>
        <taxon>Archaea</taxon>
        <taxon>Thermoproteota</taxon>
        <taxon>Thermoprotei</taxon>
        <taxon>Desulfurococcales</taxon>
        <taxon>Pyrodictiaceae</taxon>
        <taxon>Hyperthermus</taxon>
    </lineage>
</organism>
<keyword id="KW-0342">GTP-binding</keyword>
<keyword id="KW-0378">Hydrolase</keyword>
<keyword id="KW-0479">Metal-binding</keyword>
<keyword id="KW-0547">Nucleotide-binding</keyword>
<keyword id="KW-0554">One-carbon metabolism</keyword>
<keyword id="KW-1185">Reference proteome</keyword>
<keyword id="KW-0862">Zinc</keyword>
<reference key="1">
    <citation type="journal article" date="2007" name="Archaea">
        <title>The genome of Hyperthermus butylicus: a sulfur-reducing, peptide fermenting, neutrophilic Crenarchaeote growing up to 108 degrees C.</title>
        <authorList>
            <person name="Bruegger K."/>
            <person name="Chen L."/>
            <person name="Stark M."/>
            <person name="Zibat A."/>
            <person name="Redder P."/>
            <person name="Ruepp A."/>
            <person name="Awayez M."/>
            <person name="She Q."/>
            <person name="Garrett R.A."/>
            <person name="Klenk H.-P."/>
        </authorList>
    </citation>
    <scope>NUCLEOTIDE SEQUENCE [LARGE SCALE GENOMIC DNA]</scope>
    <source>
        <strain>DSM 5456 / JCM 9403 / PLM1-5</strain>
    </source>
</reference>
<sequence>MPIDKAKIEKAVRMILEAIGEDPEREGLRETPRRVADMFEELLEGYDFTEEYTWFTEATDLVVVSGIRFYSLCEHHLLPFFGVAHVAYLPRGKVIGLSKIVRIVNKYSRRLQIQERMTKQIADEISKATGSPDVMVITEAVHLCMAMRGVRNGAPTVVAAVRGEFERDQSLKEEVYRIIEPHRLSRVIALSFF</sequence>
<gene>
    <name evidence="1" type="primary">folE</name>
    <name type="ordered locus">Hbut_0868</name>
</gene>
<name>GCH1_HYPBU</name>